<proteinExistence type="inferred from homology"/>
<organism>
    <name type="scientific">Aspergillus fumigatus (strain CBS 144.89 / FGSC A1163 / CEA10)</name>
    <name type="common">Neosartorya fumigata</name>
    <dbReference type="NCBI Taxonomy" id="451804"/>
    <lineage>
        <taxon>Eukaryota</taxon>
        <taxon>Fungi</taxon>
        <taxon>Dikarya</taxon>
        <taxon>Ascomycota</taxon>
        <taxon>Pezizomycotina</taxon>
        <taxon>Eurotiomycetes</taxon>
        <taxon>Eurotiomycetidae</taxon>
        <taxon>Eurotiales</taxon>
        <taxon>Aspergillaceae</taxon>
        <taxon>Aspergillus</taxon>
        <taxon>Aspergillus subgen. Fumigati</taxon>
    </lineage>
</organism>
<gene>
    <name type="primary">erb1</name>
    <name type="ORF">AFUB_008620</name>
</gene>
<evidence type="ECO:0000255" key="1">
    <source>
        <dbReference type="HAMAP-Rule" id="MF_03027"/>
    </source>
</evidence>
<evidence type="ECO:0000256" key="2">
    <source>
        <dbReference type="SAM" id="MobiDB-lite"/>
    </source>
</evidence>
<name>ERB1_ASPFC</name>
<feature type="chain" id="PRO_0000370417" description="Ribosome biogenesis protein erb1">
    <location>
        <begin position="1"/>
        <end position="796"/>
    </location>
</feature>
<feature type="repeat" description="WD 1">
    <location>
        <begin position="434"/>
        <end position="473"/>
    </location>
</feature>
<feature type="repeat" description="WD 2">
    <location>
        <begin position="477"/>
        <end position="517"/>
    </location>
</feature>
<feature type="repeat" description="WD 3">
    <location>
        <begin position="619"/>
        <end position="657"/>
    </location>
</feature>
<feature type="repeat" description="WD 4">
    <location>
        <begin position="660"/>
        <end position="705"/>
    </location>
</feature>
<feature type="repeat" description="WD 5">
    <location>
        <begin position="709"/>
        <end position="750"/>
    </location>
</feature>
<feature type="repeat" description="WD 6">
    <location>
        <begin position="766"/>
        <end position="796"/>
    </location>
</feature>
<feature type="region of interest" description="Disordered" evidence="2">
    <location>
        <begin position="1"/>
        <end position="134"/>
    </location>
</feature>
<feature type="region of interest" description="Disordered" evidence="2">
    <location>
        <begin position="320"/>
        <end position="366"/>
    </location>
</feature>
<feature type="compositionally biased region" description="Basic residues" evidence="2">
    <location>
        <begin position="1"/>
        <end position="12"/>
    </location>
</feature>
<feature type="compositionally biased region" description="Acidic residues" evidence="2">
    <location>
        <begin position="47"/>
        <end position="84"/>
    </location>
</feature>
<feature type="compositionally biased region" description="Acidic residues" evidence="2">
    <location>
        <begin position="102"/>
        <end position="119"/>
    </location>
</feature>
<feature type="compositionally biased region" description="Basic and acidic residues" evidence="2">
    <location>
        <begin position="123"/>
        <end position="134"/>
    </location>
</feature>
<feature type="compositionally biased region" description="Pro residues" evidence="2">
    <location>
        <begin position="326"/>
        <end position="343"/>
    </location>
</feature>
<feature type="compositionally biased region" description="Basic and acidic residues" evidence="2">
    <location>
        <begin position="345"/>
        <end position="366"/>
    </location>
</feature>
<accession>B0XQ42</accession>
<keyword id="KW-0539">Nucleus</keyword>
<keyword id="KW-0677">Repeat</keyword>
<keyword id="KW-0690">Ribosome biogenesis</keyword>
<keyword id="KW-0698">rRNA processing</keyword>
<keyword id="KW-0853">WD repeat</keyword>
<sequence length="796" mass="88988">MNTSKASKKRKAVTRDVEEEAGVFSGDELNTGNLDGALSDNAHDLSSDEDESDSEVELIDDFSDEEDEEEEDVLDSDEIPSDGEDSAKKKSNAAPGELGAVIDDDDDDDDDESPSEEEQLNYRIEKDANGNDRFVYDEINPDDNSDYSDVDENANTIGNIPLSFYDQYPHIGYDINGKKIMRPAKGEALDALLDSIEIPKGWTGLTDPSTGKPLELSQEELELLRKVQMNEIPEDGYNPYEPIVEWFTSQQEIMPLSAAPEPKRRFVPSKHEAKRVMKIVKAIREGRILPFKPPTEEDEEDDTIVKYDLWADEAERKDHPMHIPAPKLPPPGYEESYHPPPEYLPSRKERKTWEEADPEDRDREFLPNDFGSLRRVPGYENFVKEKFERCLDLYLAPRVRRSKLNIDPESLLPKLPSPEELKPFPTACATVFRGHKGRVRTLAVDPSGLWLASGGDDGTVRVWELLTGRQLWSVKLSEEDPVNVVRWRPGKDALILAAAAGDDIFLAVPPIVDPAMEKASLDILDAGWGYAASVPPPTPAEANKKNNPPKWMRPSSSLADSGVCAVIPLRYVAKSLSWHRRGDYFVTVCPGSSTPASVAIAIHTLSKHLTQYPFRRRIKGGGPPQAAHFHPSKPILFVANQRSIRAYDLSRQLLVKILQPGARWISSFDIHPTSSTASGGDNLIVGSYDRRLLWHDLELSQRPYKTLRYHRKAIRAVKFHPGGRYPLFADASDDGSLQIFHGSVTGDMLSNATIVPLKVLKGHKITGELGVLDVDWHPREPWCVSAGADGTCRLWM</sequence>
<reference key="1">
    <citation type="journal article" date="2008" name="PLoS Genet.">
        <title>Genomic islands in the pathogenic filamentous fungus Aspergillus fumigatus.</title>
        <authorList>
            <person name="Fedorova N.D."/>
            <person name="Khaldi N."/>
            <person name="Joardar V.S."/>
            <person name="Maiti R."/>
            <person name="Amedeo P."/>
            <person name="Anderson M.J."/>
            <person name="Crabtree J."/>
            <person name="Silva J.C."/>
            <person name="Badger J.H."/>
            <person name="Albarraq A."/>
            <person name="Angiuoli S."/>
            <person name="Bussey H."/>
            <person name="Bowyer P."/>
            <person name="Cotty P.J."/>
            <person name="Dyer P.S."/>
            <person name="Egan A."/>
            <person name="Galens K."/>
            <person name="Fraser-Liggett C.M."/>
            <person name="Haas B.J."/>
            <person name="Inman J.M."/>
            <person name="Kent R."/>
            <person name="Lemieux S."/>
            <person name="Malavazi I."/>
            <person name="Orvis J."/>
            <person name="Roemer T."/>
            <person name="Ronning C.M."/>
            <person name="Sundaram J.P."/>
            <person name="Sutton G."/>
            <person name="Turner G."/>
            <person name="Venter J.C."/>
            <person name="White O.R."/>
            <person name="Whitty B.R."/>
            <person name="Youngman P."/>
            <person name="Wolfe K.H."/>
            <person name="Goldman G.H."/>
            <person name="Wortman J.R."/>
            <person name="Jiang B."/>
            <person name="Denning D.W."/>
            <person name="Nierman W.C."/>
        </authorList>
    </citation>
    <scope>NUCLEOTIDE SEQUENCE [LARGE SCALE GENOMIC DNA]</scope>
    <source>
        <strain>CBS 144.89 / FGSC A1163 / CEA10</strain>
    </source>
</reference>
<comment type="function">
    <text evidence="1">Component of the NOP7 complex, which is required for maturation of the 25S and 5.8S ribosomal RNAs and formation of the 60S ribosome.</text>
</comment>
<comment type="subunit">
    <text evidence="1">Component of the NOP7 complex, composed of erb1, nop7 and ytm1. The complex is held together by erb1, which interacts with nop7 via its N-terminal domain and with ytm1 via a high-affinity interaction between the seven-bladed beta-propeller domains of the 2 proteins. The NOP7 complex associates with the 66S pre-ribosome.</text>
</comment>
<comment type="subcellular location">
    <subcellularLocation>
        <location evidence="1">Nucleus</location>
        <location evidence="1">Nucleolus</location>
    </subcellularLocation>
    <subcellularLocation>
        <location evidence="1">Nucleus</location>
        <location evidence="1">Nucleoplasm</location>
    </subcellularLocation>
</comment>
<comment type="similarity">
    <text evidence="1">Belongs to the WD repeat BOP1/ERB1 family.</text>
</comment>
<dbReference type="EMBL" id="DS499594">
    <property type="protein sequence ID" value="EDP56156.1"/>
    <property type="molecule type" value="Genomic_DNA"/>
</dbReference>
<dbReference type="SMR" id="B0XQ42"/>
<dbReference type="EnsemblFungi" id="EDP56156">
    <property type="protein sequence ID" value="EDP56156"/>
    <property type="gene ID" value="AFUB_008620"/>
</dbReference>
<dbReference type="VEuPathDB" id="FungiDB:AFUB_008620"/>
<dbReference type="HOGENOM" id="CLU_011390_0_1_1"/>
<dbReference type="OrthoDB" id="69764at5052"/>
<dbReference type="PhylomeDB" id="B0XQ42"/>
<dbReference type="Proteomes" id="UP000001699">
    <property type="component" value="Unassembled WGS sequence"/>
</dbReference>
<dbReference type="GO" id="GO:0005654">
    <property type="term" value="C:nucleoplasm"/>
    <property type="evidence" value="ECO:0007669"/>
    <property type="project" value="UniProtKB-SubCell"/>
</dbReference>
<dbReference type="GO" id="GO:0070545">
    <property type="term" value="C:PeBoW complex"/>
    <property type="evidence" value="ECO:0007669"/>
    <property type="project" value="EnsemblFungi"/>
</dbReference>
<dbReference type="GO" id="GO:0030687">
    <property type="term" value="C:preribosome, large subunit precursor"/>
    <property type="evidence" value="ECO:0007669"/>
    <property type="project" value="UniProtKB-UniRule"/>
</dbReference>
<dbReference type="GO" id="GO:0070180">
    <property type="term" value="F:large ribosomal subunit rRNA binding"/>
    <property type="evidence" value="ECO:0007669"/>
    <property type="project" value="EnsemblFungi"/>
</dbReference>
<dbReference type="GO" id="GO:0043021">
    <property type="term" value="F:ribonucleoprotein complex binding"/>
    <property type="evidence" value="ECO:0007669"/>
    <property type="project" value="UniProtKB-UniRule"/>
</dbReference>
<dbReference type="GO" id="GO:0000466">
    <property type="term" value="P:maturation of 5.8S rRNA from tricistronic rRNA transcript (SSU-rRNA, 5.8S rRNA, LSU-rRNA)"/>
    <property type="evidence" value="ECO:0007669"/>
    <property type="project" value="UniProtKB-UniRule"/>
</dbReference>
<dbReference type="GO" id="GO:0000463">
    <property type="term" value="P:maturation of LSU-rRNA from tricistronic rRNA transcript (SSU-rRNA, 5.8S rRNA, LSU-rRNA)"/>
    <property type="evidence" value="ECO:0007669"/>
    <property type="project" value="UniProtKB-UniRule"/>
</dbReference>
<dbReference type="FunFam" id="2.130.10.10:FF:000061">
    <property type="entry name" value="Ribosome biogenesis protein BOP1 homolog"/>
    <property type="match status" value="1"/>
</dbReference>
<dbReference type="Gene3D" id="2.130.10.10">
    <property type="entry name" value="YVTN repeat-like/Quinoprotein amine dehydrogenase"/>
    <property type="match status" value="1"/>
</dbReference>
<dbReference type="HAMAP" id="MF_03027">
    <property type="entry name" value="BOP1"/>
    <property type="match status" value="1"/>
</dbReference>
<dbReference type="InterPro" id="IPR028598">
    <property type="entry name" value="BOP1/Erb1"/>
</dbReference>
<dbReference type="InterPro" id="IPR012953">
    <property type="entry name" value="BOP1_N_dom"/>
</dbReference>
<dbReference type="InterPro" id="IPR015943">
    <property type="entry name" value="WD40/YVTN_repeat-like_dom_sf"/>
</dbReference>
<dbReference type="InterPro" id="IPR019775">
    <property type="entry name" value="WD40_repeat_CS"/>
</dbReference>
<dbReference type="InterPro" id="IPR036322">
    <property type="entry name" value="WD40_repeat_dom_sf"/>
</dbReference>
<dbReference type="InterPro" id="IPR001680">
    <property type="entry name" value="WD40_rpt"/>
</dbReference>
<dbReference type="PANTHER" id="PTHR17605:SF0">
    <property type="entry name" value="RIBOSOME BIOGENESIS PROTEIN BOP1"/>
    <property type="match status" value="1"/>
</dbReference>
<dbReference type="PANTHER" id="PTHR17605">
    <property type="entry name" value="RIBOSOME BIOGENESIS PROTEIN BOP1 BLOCK OF PROLIFERATION 1 PROTEIN"/>
    <property type="match status" value="1"/>
</dbReference>
<dbReference type="Pfam" id="PF08145">
    <property type="entry name" value="BOP1NT"/>
    <property type="match status" value="1"/>
</dbReference>
<dbReference type="Pfam" id="PF00400">
    <property type="entry name" value="WD40"/>
    <property type="match status" value="3"/>
</dbReference>
<dbReference type="SMART" id="SM01035">
    <property type="entry name" value="BOP1NT"/>
    <property type="match status" value="1"/>
</dbReference>
<dbReference type="SMART" id="SM00320">
    <property type="entry name" value="WD40"/>
    <property type="match status" value="4"/>
</dbReference>
<dbReference type="SUPFAM" id="SSF50978">
    <property type="entry name" value="WD40 repeat-like"/>
    <property type="match status" value="1"/>
</dbReference>
<dbReference type="PROSITE" id="PS00678">
    <property type="entry name" value="WD_REPEATS_1"/>
    <property type="match status" value="1"/>
</dbReference>
<dbReference type="PROSITE" id="PS50082">
    <property type="entry name" value="WD_REPEATS_2"/>
    <property type="match status" value="2"/>
</dbReference>
<dbReference type="PROSITE" id="PS50294">
    <property type="entry name" value="WD_REPEATS_REGION"/>
    <property type="match status" value="1"/>
</dbReference>
<protein>
    <recommendedName>
        <fullName evidence="1">Ribosome biogenesis protein erb1</fullName>
    </recommendedName>
    <alternativeName>
        <fullName evidence="1">Eukaryotic ribosome biogenesis protein 1</fullName>
    </alternativeName>
</protein>